<accession>Q891Z7</accession>
<organism>
    <name type="scientific">Clostridium tetani (strain Massachusetts / E88)</name>
    <dbReference type="NCBI Taxonomy" id="212717"/>
    <lineage>
        <taxon>Bacteria</taxon>
        <taxon>Bacillati</taxon>
        <taxon>Bacillota</taxon>
        <taxon>Clostridia</taxon>
        <taxon>Eubacteriales</taxon>
        <taxon>Clostridiaceae</taxon>
        <taxon>Clostridium</taxon>
    </lineage>
</organism>
<sequence>MYDYIKGIYKGMHKDYITVENNGIGYKIFTSGNTLYETPEKDEEIKLYIQQIPRDDSINLYGFFTEEERDMFNLLMTISGVGAKSSLSLLSVTSINKLKYSIVTEDTTLLTRAPGIGRKTAERIILELKDKFKNDDIISDIDDLDSISNFQLHSAEALEALMSLGYSQKESEKALKNVDKENSLEDIIKACLKYLMG</sequence>
<evidence type="ECO:0000255" key="1">
    <source>
        <dbReference type="HAMAP-Rule" id="MF_00031"/>
    </source>
</evidence>
<keyword id="KW-0963">Cytoplasm</keyword>
<keyword id="KW-0227">DNA damage</keyword>
<keyword id="KW-0233">DNA recombination</keyword>
<keyword id="KW-0234">DNA repair</keyword>
<keyword id="KW-0238">DNA-binding</keyword>
<keyword id="KW-1185">Reference proteome</keyword>
<proteinExistence type="inferred from homology"/>
<name>RUVA_CLOTE</name>
<comment type="function">
    <text evidence="1">The RuvA-RuvB-RuvC complex processes Holliday junction (HJ) DNA during genetic recombination and DNA repair, while the RuvA-RuvB complex plays an important role in the rescue of blocked DNA replication forks via replication fork reversal (RFR). RuvA specifically binds to HJ cruciform DNA, conferring on it an open structure. The RuvB hexamer acts as an ATP-dependent pump, pulling dsDNA into and through the RuvAB complex. HJ branch migration allows RuvC to scan DNA until it finds its consensus sequence, where it cleaves and resolves the cruciform DNA.</text>
</comment>
<comment type="subunit">
    <text evidence="1">Homotetramer. Forms an RuvA(8)-RuvB(12)-Holliday junction (HJ) complex. HJ DNA is sandwiched between 2 RuvA tetramers; dsDNA enters through RuvA and exits via RuvB. An RuvB hexamer assembles on each DNA strand where it exits the tetramer. Each RuvB hexamer is contacted by two RuvA subunits (via domain III) on 2 adjacent RuvB subunits; this complex drives branch migration. In the full resolvosome a probable DNA-RuvA(4)-RuvB(12)-RuvC(2) complex forms which resolves the HJ.</text>
</comment>
<comment type="subcellular location">
    <subcellularLocation>
        <location evidence="1">Cytoplasm</location>
    </subcellularLocation>
</comment>
<comment type="domain">
    <text evidence="1">Has three domains with a flexible linker between the domains II and III and assumes an 'L' shape. Domain III is highly mobile and contacts RuvB.</text>
</comment>
<comment type="similarity">
    <text evidence="1">Belongs to the RuvA family.</text>
</comment>
<gene>
    <name evidence="1" type="primary">ruvA</name>
    <name type="ordered locus">CTC_02212</name>
</gene>
<protein>
    <recommendedName>
        <fullName evidence="1">Holliday junction branch migration complex subunit RuvA</fullName>
    </recommendedName>
</protein>
<dbReference type="EMBL" id="AE015927">
    <property type="protein sequence ID" value="AAO36698.1"/>
    <property type="molecule type" value="Genomic_DNA"/>
</dbReference>
<dbReference type="RefSeq" id="WP_011100359.1">
    <property type="nucleotide sequence ID" value="NC_004557.1"/>
</dbReference>
<dbReference type="SMR" id="Q891Z7"/>
<dbReference type="STRING" id="212717.CTC_02212"/>
<dbReference type="GeneID" id="24253085"/>
<dbReference type="KEGG" id="ctc:CTC_02212"/>
<dbReference type="HOGENOM" id="CLU_087936_3_0_9"/>
<dbReference type="OrthoDB" id="5293449at2"/>
<dbReference type="Proteomes" id="UP000001412">
    <property type="component" value="Chromosome"/>
</dbReference>
<dbReference type="GO" id="GO:0005737">
    <property type="term" value="C:cytoplasm"/>
    <property type="evidence" value="ECO:0007669"/>
    <property type="project" value="UniProtKB-SubCell"/>
</dbReference>
<dbReference type="GO" id="GO:0009379">
    <property type="term" value="C:Holliday junction helicase complex"/>
    <property type="evidence" value="ECO:0007669"/>
    <property type="project" value="InterPro"/>
</dbReference>
<dbReference type="GO" id="GO:0048476">
    <property type="term" value="C:Holliday junction resolvase complex"/>
    <property type="evidence" value="ECO:0007669"/>
    <property type="project" value="UniProtKB-UniRule"/>
</dbReference>
<dbReference type="GO" id="GO:0005524">
    <property type="term" value="F:ATP binding"/>
    <property type="evidence" value="ECO:0007669"/>
    <property type="project" value="InterPro"/>
</dbReference>
<dbReference type="GO" id="GO:0000400">
    <property type="term" value="F:four-way junction DNA binding"/>
    <property type="evidence" value="ECO:0007669"/>
    <property type="project" value="UniProtKB-UniRule"/>
</dbReference>
<dbReference type="GO" id="GO:0009378">
    <property type="term" value="F:four-way junction helicase activity"/>
    <property type="evidence" value="ECO:0007669"/>
    <property type="project" value="InterPro"/>
</dbReference>
<dbReference type="GO" id="GO:0006310">
    <property type="term" value="P:DNA recombination"/>
    <property type="evidence" value="ECO:0007669"/>
    <property type="project" value="UniProtKB-UniRule"/>
</dbReference>
<dbReference type="GO" id="GO:0006281">
    <property type="term" value="P:DNA repair"/>
    <property type="evidence" value="ECO:0007669"/>
    <property type="project" value="UniProtKB-UniRule"/>
</dbReference>
<dbReference type="CDD" id="cd14332">
    <property type="entry name" value="UBA_RuvA_C"/>
    <property type="match status" value="1"/>
</dbReference>
<dbReference type="Gene3D" id="1.10.150.20">
    <property type="entry name" value="5' to 3' exonuclease, C-terminal subdomain"/>
    <property type="match status" value="1"/>
</dbReference>
<dbReference type="Gene3D" id="1.10.8.10">
    <property type="entry name" value="DNA helicase RuvA subunit, C-terminal domain"/>
    <property type="match status" value="1"/>
</dbReference>
<dbReference type="Gene3D" id="2.40.50.140">
    <property type="entry name" value="Nucleic acid-binding proteins"/>
    <property type="match status" value="1"/>
</dbReference>
<dbReference type="HAMAP" id="MF_00031">
    <property type="entry name" value="DNA_HJ_migration_RuvA"/>
    <property type="match status" value="1"/>
</dbReference>
<dbReference type="InterPro" id="IPR013849">
    <property type="entry name" value="DNA_helicase_Holl-junc_RuvA_I"/>
</dbReference>
<dbReference type="InterPro" id="IPR003583">
    <property type="entry name" value="Hlx-hairpin-Hlx_DNA-bd_motif"/>
</dbReference>
<dbReference type="InterPro" id="IPR012340">
    <property type="entry name" value="NA-bd_OB-fold"/>
</dbReference>
<dbReference type="InterPro" id="IPR000085">
    <property type="entry name" value="RuvA"/>
</dbReference>
<dbReference type="InterPro" id="IPR010994">
    <property type="entry name" value="RuvA_2-like"/>
</dbReference>
<dbReference type="InterPro" id="IPR011114">
    <property type="entry name" value="RuvA_C"/>
</dbReference>
<dbReference type="InterPro" id="IPR036267">
    <property type="entry name" value="RuvA_C_sf"/>
</dbReference>
<dbReference type="NCBIfam" id="TIGR00084">
    <property type="entry name" value="ruvA"/>
    <property type="match status" value="1"/>
</dbReference>
<dbReference type="Pfam" id="PF14520">
    <property type="entry name" value="HHH_5"/>
    <property type="match status" value="1"/>
</dbReference>
<dbReference type="Pfam" id="PF07499">
    <property type="entry name" value="RuvA_C"/>
    <property type="match status" value="1"/>
</dbReference>
<dbReference type="Pfam" id="PF01330">
    <property type="entry name" value="RuvA_N"/>
    <property type="match status" value="1"/>
</dbReference>
<dbReference type="SMART" id="SM00278">
    <property type="entry name" value="HhH1"/>
    <property type="match status" value="2"/>
</dbReference>
<dbReference type="SUPFAM" id="SSF46929">
    <property type="entry name" value="DNA helicase RuvA subunit, C-terminal domain"/>
    <property type="match status" value="1"/>
</dbReference>
<dbReference type="SUPFAM" id="SSF50249">
    <property type="entry name" value="Nucleic acid-binding proteins"/>
    <property type="match status" value="1"/>
</dbReference>
<dbReference type="SUPFAM" id="SSF47781">
    <property type="entry name" value="RuvA domain 2-like"/>
    <property type="match status" value="1"/>
</dbReference>
<feature type="chain" id="PRO_0000094624" description="Holliday junction branch migration complex subunit RuvA">
    <location>
        <begin position="1"/>
        <end position="197"/>
    </location>
</feature>
<feature type="region of interest" description="Domain I" evidence="1">
    <location>
        <begin position="1"/>
        <end position="64"/>
    </location>
</feature>
<feature type="region of interest" description="Domain II" evidence="1">
    <location>
        <begin position="65"/>
        <end position="143"/>
    </location>
</feature>
<feature type="region of interest" description="Flexible linker" evidence="1">
    <location>
        <begin position="144"/>
        <end position="154"/>
    </location>
</feature>
<feature type="region of interest" description="Domain III" evidence="1">
    <location>
        <begin position="154"/>
        <end position="197"/>
    </location>
</feature>
<reference key="1">
    <citation type="journal article" date="2003" name="Proc. Natl. Acad. Sci. U.S.A.">
        <title>The genome sequence of Clostridium tetani, the causative agent of tetanus disease.</title>
        <authorList>
            <person name="Brueggemann H."/>
            <person name="Baeumer S."/>
            <person name="Fricke W.F."/>
            <person name="Wiezer A."/>
            <person name="Liesegang H."/>
            <person name="Decker I."/>
            <person name="Herzberg C."/>
            <person name="Martinez-Arias R."/>
            <person name="Merkl R."/>
            <person name="Henne A."/>
            <person name="Gottschalk G."/>
        </authorList>
    </citation>
    <scope>NUCLEOTIDE SEQUENCE [LARGE SCALE GENOMIC DNA]</scope>
    <source>
        <strain>Massachusetts / E88</strain>
    </source>
</reference>